<organism>
    <name type="scientific">Acinetobacter baylyi (strain ATCC 33305 / BD413 / ADP1)</name>
    <dbReference type="NCBI Taxonomy" id="62977"/>
    <lineage>
        <taxon>Bacteria</taxon>
        <taxon>Pseudomonadati</taxon>
        <taxon>Pseudomonadota</taxon>
        <taxon>Gammaproteobacteria</taxon>
        <taxon>Moraxellales</taxon>
        <taxon>Moraxellaceae</taxon>
        <taxon>Acinetobacter</taxon>
    </lineage>
</organism>
<reference key="1">
    <citation type="journal article" date="2004" name="Nucleic Acids Res.">
        <title>Unique features revealed by the genome sequence of Acinetobacter sp. ADP1, a versatile and naturally transformation competent bacterium.</title>
        <authorList>
            <person name="Barbe V."/>
            <person name="Vallenet D."/>
            <person name="Fonknechten N."/>
            <person name="Kreimeyer A."/>
            <person name="Oztas S."/>
            <person name="Labarre L."/>
            <person name="Cruveiller S."/>
            <person name="Robert C."/>
            <person name="Duprat S."/>
            <person name="Wincker P."/>
            <person name="Ornston L.N."/>
            <person name="Weissenbach J."/>
            <person name="Marliere P."/>
            <person name="Cohen G.N."/>
            <person name="Medigue C."/>
        </authorList>
    </citation>
    <scope>NUCLEOTIDE SEQUENCE [LARGE SCALE GENOMIC DNA]</scope>
    <source>
        <strain>ATCC 33305 / BD413 / ADP1</strain>
    </source>
</reference>
<name>UPPP3_ACIAD</name>
<evidence type="ECO:0000255" key="1">
    <source>
        <dbReference type="HAMAP-Rule" id="MF_01006"/>
    </source>
</evidence>
<keyword id="KW-0046">Antibiotic resistance</keyword>
<keyword id="KW-0997">Cell inner membrane</keyword>
<keyword id="KW-1003">Cell membrane</keyword>
<keyword id="KW-0133">Cell shape</keyword>
<keyword id="KW-0961">Cell wall biogenesis/degradation</keyword>
<keyword id="KW-0378">Hydrolase</keyword>
<keyword id="KW-0472">Membrane</keyword>
<keyword id="KW-0573">Peptidoglycan synthesis</keyword>
<keyword id="KW-0812">Transmembrane</keyword>
<keyword id="KW-1133">Transmembrane helix</keyword>
<proteinExistence type="inferred from homology"/>
<dbReference type="EC" id="3.6.1.27" evidence="1"/>
<dbReference type="EMBL" id="CR543861">
    <property type="protein sequence ID" value="CAG68488.1"/>
    <property type="molecule type" value="Genomic_DNA"/>
</dbReference>
<dbReference type="RefSeq" id="WP_004924960.1">
    <property type="nucleotide sequence ID" value="NC_005966.1"/>
</dbReference>
<dbReference type="SMR" id="Q6FBS3"/>
<dbReference type="STRING" id="202950.GCA_001485005_03295"/>
<dbReference type="GeneID" id="45234028"/>
<dbReference type="KEGG" id="aci:ACIAD1642"/>
<dbReference type="eggNOG" id="COG1968">
    <property type="taxonomic scope" value="Bacteria"/>
</dbReference>
<dbReference type="HOGENOM" id="CLU_060296_2_0_6"/>
<dbReference type="OrthoDB" id="9808289at2"/>
<dbReference type="BioCyc" id="ASP62977:ACIAD_RS07535-MONOMER"/>
<dbReference type="Proteomes" id="UP000000430">
    <property type="component" value="Chromosome"/>
</dbReference>
<dbReference type="GO" id="GO:0005886">
    <property type="term" value="C:plasma membrane"/>
    <property type="evidence" value="ECO:0007669"/>
    <property type="project" value="UniProtKB-SubCell"/>
</dbReference>
<dbReference type="GO" id="GO:0050380">
    <property type="term" value="F:undecaprenyl-diphosphatase activity"/>
    <property type="evidence" value="ECO:0007669"/>
    <property type="project" value="UniProtKB-UniRule"/>
</dbReference>
<dbReference type="GO" id="GO:0071555">
    <property type="term" value="P:cell wall organization"/>
    <property type="evidence" value="ECO:0007669"/>
    <property type="project" value="UniProtKB-KW"/>
</dbReference>
<dbReference type="GO" id="GO:0009252">
    <property type="term" value="P:peptidoglycan biosynthetic process"/>
    <property type="evidence" value="ECO:0007669"/>
    <property type="project" value="UniProtKB-KW"/>
</dbReference>
<dbReference type="GO" id="GO:0008360">
    <property type="term" value="P:regulation of cell shape"/>
    <property type="evidence" value="ECO:0007669"/>
    <property type="project" value="UniProtKB-KW"/>
</dbReference>
<dbReference type="GO" id="GO:0046677">
    <property type="term" value="P:response to antibiotic"/>
    <property type="evidence" value="ECO:0007669"/>
    <property type="project" value="UniProtKB-UniRule"/>
</dbReference>
<dbReference type="HAMAP" id="MF_01006">
    <property type="entry name" value="Undec_diphosphatase"/>
    <property type="match status" value="1"/>
</dbReference>
<dbReference type="InterPro" id="IPR003824">
    <property type="entry name" value="UppP"/>
</dbReference>
<dbReference type="NCBIfam" id="NF001389">
    <property type="entry name" value="PRK00281.1-2"/>
    <property type="match status" value="1"/>
</dbReference>
<dbReference type="NCBIfam" id="NF001390">
    <property type="entry name" value="PRK00281.1-4"/>
    <property type="match status" value="1"/>
</dbReference>
<dbReference type="NCBIfam" id="TIGR00753">
    <property type="entry name" value="undec_PP_bacA"/>
    <property type="match status" value="1"/>
</dbReference>
<dbReference type="PANTHER" id="PTHR30622">
    <property type="entry name" value="UNDECAPRENYL-DIPHOSPHATASE"/>
    <property type="match status" value="1"/>
</dbReference>
<dbReference type="PANTHER" id="PTHR30622:SF3">
    <property type="entry name" value="UNDECAPRENYL-DIPHOSPHATASE"/>
    <property type="match status" value="1"/>
</dbReference>
<dbReference type="Pfam" id="PF02673">
    <property type="entry name" value="BacA"/>
    <property type="match status" value="1"/>
</dbReference>
<gene>
    <name evidence="1" type="primary">uppP3</name>
    <name type="ordered locus">ACIAD1642</name>
</gene>
<accession>Q6FBS3</accession>
<feature type="chain" id="PRO_0000151078" description="Undecaprenyl-diphosphatase 3">
    <location>
        <begin position="1"/>
        <end position="266"/>
    </location>
</feature>
<feature type="transmembrane region" description="Helical" evidence="1">
    <location>
        <begin position="4"/>
        <end position="24"/>
    </location>
</feature>
<feature type="transmembrane region" description="Helical" evidence="1">
    <location>
        <begin position="43"/>
        <end position="63"/>
    </location>
</feature>
<feature type="transmembrane region" description="Helical" evidence="1">
    <location>
        <begin position="86"/>
        <end position="106"/>
    </location>
</feature>
<feature type="transmembrane region" description="Helical" evidence="1">
    <location>
        <begin position="109"/>
        <end position="129"/>
    </location>
</feature>
<feature type="transmembrane region" description="Helical" evidence="1">
    <location>
        <begin position="145"/>
        <end position="165"/>
    </location>
</feature>
<feature type="transmembrane region" description="Helical" evidence="1">
    <location>
        <begin position="186"/>
        <end position="206"/>
    </location>
</feature>
<feature type="transmembrane region" description="Helical" evidence="1">
    <location>
        <begin position="219"/>
        <end position="239"/>
    </location>
</feature>
<feature type="transmembrane region" description="Helical" evidence="1">
    <location>
        <begin position="246"/>
        <end position="266"/>
    </location>
</feature>
<sequence>MGNIEAFKALFLGFIEGLTEFLPISSTGHLILFGHLIDFHSDSGRAFEVVIQLGAILAVCWLYRKKIIDLVQGFFSGDQEARHFTFSVLMAFFPAVIIGVLAVDFIKSVLFSPLVVAIALIIGGLIIFWVESRDFKPSTTEATKITFKQAIAVGFIQCLAMIPGTSRSGATIIGGMLSGLSRKAATEFSFFLAMPTMLGAATYDLLRNADVLTSDNMLNIGLGFITAFISALFVVKALVRFVEKHTLRVFAWYRIVLGIIIMFVML</sequence>
<comment type="function">
    <text evidence="1">Catalyzes the dephosphorylation of undecaprenyl diphosphate (UPP). Confers resistance to bacitracin.</text>
</comment>
<comment type="catalytic activity">
    <reaction evidence="1">
        <text>di-trans,octa-cis-undecaprenyl diphosphate + H2O = di-trans,octa-cis-undecaprenyl phosphate + phosphate + H(+)</text>
        <dbReference type="Rhea" id="RHEA:28094"/>
        <dbReference type="ChEBI" id="CHEBI:15377"/>
        <dbReference type="ChEBI" id="CHEBI:15378"/>
        <dbReference type="ChEBI" id="CHEBI:43474"/>
        <dbReference type="ChEBI" id="CHEBI:58405"/>
        <dbReference type="ChEBI" id="CHEBI:60392"/>
        <dbReference type="EC" id="3.6.1.27"/>
    </reaction>
</comment>
<comment type="subcellular location">
    <subcellularLocation>
        <location evidence="1">Cell inner membrane</location>
        <topology evidence="1">Multi-pass membrane protein</topology>
    </subcellularLocation>
</comment>
<comment type="miscellaneous">
    <text>Bacitracin is thought to be involved in the inhibition of peptidoglycan synthesis by sequestering undecaprenyl diphosphate, thereby reducing the pool of lipid carrier available.</text>
</comment>
<comment type="similarity">
    <text evidence="1">Belongs to the UppP family.</text>
</comment>
<protein>
    <recommendedName>
        <fullName evidence="1">Undecaprenyl-diphosphatase 3</fullName>
        <ecNumber evidence="1">3.6.1.27</ecNumber>
    </recommendedName>
    <alternativeName>
        <fullName evidence="1">Bacitracin resistance protein 3</fullName>
    </alternativeName>
    <alternativeName>
        <fullName evidence="1">Undecaprenyl pyrophosphate phosphatase 3</fullName>
    </alternativeName>
</protein>